<comment type="function">
    <text evidence="1">Catalyzes the reversible transfer of the terminal phosphate group between ATP and AMP. Plays an important role in cellular energy homeostasis and in adenine nucleotide metabolism.</text>
</comment>
<comment type="catalytic activity">
    <reaction evidence="1">
        <text>AMP + ATP = 2 ADP</text>
        <dbReference type="Rhea" id="RHEA:12973"/>
        <dbReference type="ChEBI" id="CHEBI:30616"/>
        <dbReference type="ChEBI" id="CHEBI:456215"/>
        <dbReference type="ChEBI" id="CHEBI:456216"/>
        <dbReference type="EC" id="2.7.4.3"/>
    </reaction>
</comment>
<comment type="pathway">
    <text evidence="1">Purine metabolism; AMP biosynthesis via salvage pathway; AMP from ADP: step 1/1.</text>
</comment>
<comment type="subunit">
    <text evidence="1">Monomer.</text>
</comment>
<comment type="subcellular location">
    <subcellularLocation>
        <location evidence="1">Cytoplasm</location>
    </subcellularLocation>
</comment>
<comment type="domain">
    <text evidence="1">Consists of three domains, a large central CORE domain and two small peripheral domains, NMPbind and LID, which undergo movements during catalysis. The LID domain closes over the site of phosphoryl transfer upon ATP binding. Assembling and dissambling the active center during each catalytic cycle provides an effective means to prevent ATP hydrolysis. Some bacteria have evolved a zinc-coordinating structure that stabilizes the LID domain.</text>
</comment>
<comment type="similarity">
    <text evidence="1">Belongs to the adenylate kinase family.</text>
</comment>
<name>KAD_LISMC</name>
<proteinExistence type="inferred from homology"/>
<reference key="1">
    <citation type="journal article" date="2012" name="BMC Genomics">
        <title>Comparative genomics and transcriptomics of lineages I, II, and III strains of Listeria monocytogenes.</title>
        <authorList>
            <person name="Hain T."/>
            <person name="Ghai R."/>
            <person name="Billion A."/>
            <person name="Kuenne C.T."/>
            <person name="Steinweg C."/>
            <person name="Izar B."/>
            <person name="Mohamed W."/>
            <person name="Mraheil M."/>
            <person name="Domann E."/>
            <person name="Schaffrath S."/>
            <person name="Karst U."/>
            <person name="Goesmann A."/>
            <person name="Oehm S."/>
            <person name="Puhler A."/>
            <person name="Merkl R."/>
            <person name="Vorwerk S."/>
            <person name="Glaser P."/>
            <person name="Garrido P."/>
            <person name="Rusniok C."/>
            <person name="Buchrieser C."/>
            <person name="Goebel W."/>
            <person name="Chakraborty T."/>
        </authorList>
    </citation>
    <scope>NUCLEOTIDE SEQUENCE [LARGE SCALE GENOMIC DNA]</scope>
    <source>
        <strain>CLIP80459</strain>
    </source>
</reference>
<gene>
    <name evidence="1" type="primary">adk</name>
    <name type="ordered locus">Lm4b_02578</name>
</gene>
<sequence length="215" mass="24233">MKLVLMGLPGAGKGTQAEQIVEKYNIPHISTGDMFRAAMKNNTELGKKAKSFMDNGDLVPDEVTNGIVRERLAEDDAKNGFLLDGFPRTVEQAEELENILNDLGTELDAVINIEVDKDVLMKRLTGRWICRTCGKTYHEIYNPPKVPGKCDLDGGELYQRDDDKKETVEKRLNVNMKQTKPLLDFYSEKGKLHNINGEQDIKDVFVDVEKILASF</sequence>
<organism>
    <name type="scientific">Listeria monocytogenes serotype 4b (strain CLIP80459)</name>
    <dbReference type="NCBI Taxonomy" id="568819"/>
    <lineage>
        <taxon>Bacteria</taxon>
        <taxon>Bacillati</taxon>
        <taxon>Bacillota</taxon>
        <taxon>Bacilli</taxon>
        <taxon>Bacillales</taxon>
        <taxon>Listeriaceae</taxon>
        <taxon>Listeria</taxon>
    </lineage>
</organism>
<feature type="chain" id="PRO_1000204419" description="Adenylate kinase">
    <location>
        <begin position="1"/>
        <end position="215"/>
    </location>
</feature>
<feature type="region of interest" description="NMP" evidence="1">
    <location>
        <begin position="30"/>
        <end position="59"/>
    </location>
</feature>
<feature type="region of interest" description="LID" evidence="1">
    <location>
        <begin position="126"/>
        <end position="163"/>
    </location>
</feature>
<feature type="binding site" evidence="1">
    <location>
        <begin position="10"/>
        <end position="15"/>
    </location>
    <ligand>
        <name>ATP</name>
        <dbReference type="ChEBI" id="CHEBI:30616"/>
    </ligand>
</feature>
<feature type="binding site" evidence="1">
    <location>
        <position position="31"/>
    </location>
    <ligand>
        <name>AMP</name>
        <dbReference type="ChEBI" id="CHEBI:456215"/>
    </ligand>
</feature>
<feature type="binding site" evidence="1">
    <location>
        <position position="36"/>
    </location>
    <ligand>
        <name>AMP</name>
        <dbReference type="ChEBI" id="CHEBI:456215"/>
    </ligand>
</feature>
<feature type="binding site" evidence="1">
    <location>
        <begin position="57"/>
        <end position="59"/>
    </location>
    <ligand>
        <name>AMP</name>
        <dbReference type="ChEBI" id="CHEBI:456215"/>
    </ligand>
</feature>
<feature type="binding site" evidence="1">
    <location>
        <begin position="85"/>
        <end position="88"/>
    </location>
    <ligand>
        <name>AMP</name>
        <dbReference type="ChEBI" id="CHEBI:456215"/>
    </ligand>
</feature>
<feature type="binding site" evidence="1">
    <location>
        <position position="92"/>
    </location>
    <ligand>
        <name>AMP</name>
        <dbReference type="ChEBI" id="CHEBI:456215"/>
    </ligand>
</feature>
<feature type="binding site" evidence="1">
    <location>
        <position position="127"/>
    </location>
    <ligand>
        <name>ATP</name>
        <dbReference type="ChEBI" id="CHEBI:30616"/>
    </ligand>
</feature>
<feature type="binding site" evidence="1">
    <location>
        <position position="130"/>
    </location>
    <ligand>
        <name>Zn(2+)</name>
        <dbReference type="ChEBI" id="CHEBI:29105"/>
        <note>structural</note>
    </ligand>
</feature>
<feature type="binding site" evidence="1">
    <location>
        <position position="133"/>
    </location>
    <ligand>
        <name>Zn(2+)</name>
        <dbReference type="ChEBI" id="CHEBI:29105"/>
        <note>structural</note>
    </ligand>
</feature>
<feature type="binding site" evidence="1">
    <location>
        <begin position="136"/>
        <end position="137"/>
    </location>
    <ligand>
        <name>ATP</name>
        <dbReference type="ChEBI" id="CHEBI:30616"/>
    </ligand>
</feature>
<feature type="binding site" evidence="1">
    <location>
        <position position="150"/>
    </location>
    <ligand>
        <name>Zn(2+)</name>
        <dbReference type="ChEBI" id="CHEBI:29105"/>
        <note>structural</note>
    </ligand>
</feature>
<feature type="binding site" evidence="1">
    <location>
        <position position="153"/>
    </location>
    <ligand>
        <name>Zn(2+)</name>
        <dbReference type="ChEBI" id="CHEBI:29105"/>
        <note>structural</note>
    </ligand>
</feature>
<feature type="binding site" evidence="1">
    <location>
        <position position="160"/>
    </location>
    <ligand>
        <name>AMP</name>
        <dbReference type="ChEBI" id="CHEBI:456215"/>
    </ligand>
</feature>
<feature type="binding site" evidence="1">
    <location>
        <position position="171"/>
    </location>
    <ligand>
        <name>AMP</name>
        <dbReference type="ChEBI" id="CHEBI:456215"/>
    </ligand>
</feature>
<feature type="binding site" evidence="1">
    <location>
        <position position="199"/>
    </location>
    <ligand>
        <name>ATP</name>
        <dbReference type="ChEBI" id="CHEBI:30616"/>
    </ligand>
</feature>
<accession>C1KZF9</accession>
<dbReference type="EC" id="2.7.4.3" evidence="1"/>
<dbReference type="EMBL" id="FM242711">
    <property type="protein sequence ID" value="CAS06332.1"/>
    <property type="molecule type" value="Genomic_DNA"/>
</dbReference>
<dbReference type="RefSeq" id="WP_003740304.1">
    <property type="nucleotide sequence ID" value="NC_012488.1"/>
</dbReference>
<dbReference type="SMR" id="C1KZF9"/>
<dbReference type="KEGG" id="lmc:Lm4b_02578"/>
<dbReference type="HOGENOM" id="CLU_032354_1_2_9"/>
<dbReference type="UniPathway" id="UPA00588">
    <property type="reaction ID" value="UER00649"/>
</dbReference>
<dbReference type="GO" id="GO:0005737">
    <property type="term" value="C:cytoplasm"/>
    <property type="evidence" value="ECO:0007669"/>
    <property type="project" value="UniProtKB-SubCell"/>
</dbReference>
<dbReference type="GO" id="GO:0004017">
    <property type="term" value="F:adenylate kinase activity"/>
    <property type="evidence" value="ECO:0007669"/>
    <property type="project" value="UniProtKB-UniRule"/>
</dbReference>
<dbReference type="GO" id="GO:0005524">
    <property type="term" value="F:ATP binding"/>
    <property type="evidence" value="ECO:0007669"/>
    <property type="project" value="UniProtKB-UniRule"/>
</dbReference>
<dbReference type="GO" id="GO:0008270">
    <property type="term" value="F:zinc ion binding"/>
    <property type="evidence" value="ECO:0007669"/>
    <property type="project" value="UniProtKB-UniRule"/>
</dbReference>
<dbReference type="GO" id="GO:0044209">
    <property type="term" value="P:AMP salvage"/>
    <property type="evidence" value="ECO:0007669"/>
    <property type="project" value="UniProtKB-UniRule"/>
</dbReference>
<dbReference type="CDD" id="cd01428">
    <property type="entry name" value="ADK"/>
    <property type="match status" value="1"/>
</dbReference>
<dbReference type="FunFam" id="3.40.50.300:FF:000106">
    <property type="entry name" value="Adenylate kinase mitochondrial"/>
    <property type="match status" value="1"/>
</dbReference>
<dbReference type="Gene3D" id="3.40.50.300">
    <property type="entry name" value="P-loop containing nucleotide triphosphate hydrolases"/>
    <property type="match status" value="1"/>
</dbReference>
<dbReference type="HAMAP" id="MF_00235">
    <property type="entry name" value="Adenylate_kinase_Adk"/>
    <property type="match status" value="1"/>
</dbReference>
<dbReference type="InterPro" id="IPR006259">
    <property type="entry name" value="Adenyl_kin_sub"/>
</dbReference>
<dbReference type="InterPro" id="IPR000850">
    <property type="entry name" value="Adenylat/UMP-CMP_kin"/>
</dbReference>
<dbReference type="InterPro" id="IPR033690">
    <property type="entry name" value="Adenylat_kinase_CS"/>
</dbReference>
<dbReference type="InterPro" id="IPR007862">
    <property type="entry name" value="Adenylate_kinase_lid-dom"/>
</dbReference>
<dbReference type="InterPro" id="IPR027417">
    <property type="entry name" value="P-loop_NTPase"/>
</dbReference>
<dbReference type="NCBIfam" id="TIGR01351">
    <property type="entry name" value="adk"/>
    <property type="match status" value="1"/>
</dbReference>
<dbReference type="NCBIfam" id="NF001380">
    <property type="entry name" value="PRK00279.1-2"/>
    <property type="match status" value="1"/>
</dbReference>
<dbReference type="NCBIfam" id="NF001381">
    <property type="entry name" value="PRK00279.1-3"/>
    <property type="match status" value="1"/>
</dbReference>
<dbReference type="NCBIfam" id="NF011100">
    <property type="entry name" value="PRK14527.1"/>
    <property type="match status" value="1"/>
</dbReference>
<dbReference type="PANTHER" id="PTHR23359">
    <property type="entry name" value="NUCLEOTIDE KINASE"/>
    <property type="match status" value="1"/>
</dbReference>
<dbReference type="Pfam" id="PF00406">
    <property type="entry name" value="ADK"/>
    <property type="match status" value="1"/>
</dbReference>
<dbReference type="Pfam" id="PF05191">
    <property type="entry name" value="ADK_lid"/>
    <property type="match status" value="1"/>
</dbReference>
<dbReference type="PRINTS" id="PR00094">
    <property type="entry name" value="ADENYLTKNASE"/>
</dbReference>
<dbReference type="SUPFAM" id="SSF52540">
    <property type="entry name" value="P-loop containing nucleoside triphosphate hydrolases"/>
    <property type="match status" value="1"/>
</dbReference>
<dbReference type="PROSITE" id="PS00113">
    <property type="entry name" value="ADENYLATE_KINASE"/>
    <property type="match status" value="1"/>
</dbReference>
<protein>
    <recommendedName>
        <fullName evidence="1">Adenylate kinase</fullName>
        <shortName evidence="1">AK</shortName>
        <ecNumber evidence="1">2.7.4.3</ecNumber>
    </recommendedName>
    <alternativeName>
        <fullName evidence="1">ATP-AMP transphosphorylase</fullName>
    </alternativeName>
    <alternativeName>
        <fullName evidence="1">ATP:AMP phosphotransferase</fullName>
    </alternativeName>
    <alternativeName>
        <fullName evidence="1">Adenylate monophosphate kinase</fullName>
    </alternativeName>
</protein>
<evidence type="ECO:0000255" key="1">
    <source>
        <dbReference type="HAMAP-Rule" id="MF_00235"/>
    </source>
</evidence>
<keyword id="KW-0067">ATP-binding</keyword>
<keyword id="KW-0963">Cytoplasm</keyword>
<keyword id="KW-0418">Kinase</keyword>
<keyword id="KW-0479">Metal-binding</keyword>
<keyword id="KW-0545">Nucleotide biosynthesis</keyword>
<keyword id="KW-0547">Nucleotide-binding</keyword>
<keyword id="KW-0808">Transferase</keyword>
<keyword id="KW-0862">Zinc</keyword>